<dbReference type="EMBL" id="M11990">
    <property type="protein sequence ID" value="AAA24678.1"/>
    <property type="molecule type" value="Genomic_DNA"/>
</dbReference>
<dbReference type="EMBL" id="L10328">
    <property type="protein sequence ID" value="AAA62058.1"/>
    <property type="molecule type" value="Genomic_DNA"/>
</dbReference>
<dbReference type="EMBL" id="U00096">
    <property type="protein sequence ID" value="AAC76730.1"/>
    <property type="molecule type" value="Genomic_DNA"/>
</dbReference>
<dbReference type="EMBL" id="AP009048">
    <property type="protein sequence ID" value="BAE77586.1"/>
    <property type="molecule type" value="Genomic_DNA"/>
</dbReference>
<dbReference type="PIR" id="I54862">
    <property type="entry name" value="I54862"/>
</dbReference>
<dbReference type="RefSeq" id="NP_418163.1">
    <property type="nucleotide sequence ID" value="NC_000913.3"/>
</dbReference>
<dbReference type="RefSeq" id="WP_001364348.1">
    <property type="nucleotide sequence ID" value="NZ_STEB01000015.1"/>
</dbReference>
<dbReference type="PDB" id="4UY8">
    <property type="method" value="EM"/>
    <property type="resolution" value="3.80 A"/>
    <property type="chains" value="7=5-24"/>
</dbReference>
<dbReference type="PDB" id="5M6S">
    <property type="method" value="EM"/>
    <property type="resolution" value="4.80 A"/>
    <property type="chains" value="A=2-24"/>
</dbReference>
<dbReference type="PDB" id="6I0Y">
    <property type="method" value="EM"/>
    <property type="resolution" value="3.20 A"/>
    <property type="chains" value="7=1-24"/>
</dbReference>
<dbReference type="PDB" id="7O19">
    <property type="method" value="EM"/>
    <property type="resolution" value="2.90 A"/>
    <property type="chains" value="B5=8-24"/>
</dbReference>
<dbReference type="PDB" id="7O1A">
    <property type="method" value="EM"/>
    <property type="resolution" value="2.40 A"/>
    <property type="chains" value="B5=8-24"/>
</dbReference>
<dbReference type="PDB" id="7O1C">
    <property type="method" value="EM"/>
    <property type="resolution" value="2.60 A"/>
    <property type="chains" value="B5=8-24"/>
</dbReference>
<dbReference type="PDB" id="7OIZ">
    <property type="method" value="EM"/>
    <property type="resolution" value="2.90 A"/>
    <property type="chains" value="7=9-24"/>
</dbReference>
<dbReference type="PDB" id="7OJ0">
    <property type="method" value="EM"/>
    <property type="resolution" value="3.50 A"/>
    <property type="chains" value="7=9-24"/>
</dbReference>
<dbReference type="PDBsum" id="4UY8"/>
<dbReference type="PDBsum" id="5M6S"/>
<dbReference type="PDBsum" id="6I0Y"/>
<dbReference type="PDBsum" id="7O19"/>
<dbReference type="PDBsum" id="7O1A"/>
<dbReference type="PDBsum" id="7O1C"/>
<dbReference type="PDBsum" id="7OIZ"/>
<dbReference type="PDBsum" id="7OJ0"/>
<dbReference type="EMDB" id="EMD-0322"/>
<dbReference type="EMDB" id="EMD-12694"/>
<dbReference type="EMDB" id="EMD-12695"/>
<dbReference type="EMDB" id="EMD-12936"/>
<dbReference type="EMDB" id="EMD-12937"/>
<dbReference type="EMDB" id="EMD-2773"/>
<dbReference type="SMR" id="P0AD89"/>
<dbReference type="BioGRID" id="4262592">
    <property type="interactions" value="20"/>
</dbReference>
<dbReference type="FunCoup" id="P0AD89">
    <property type="interactions" value="34"/>
</dbReference>
<dbReference type="STRING" id="511145.b3707"/>
<dbReference type="PaxDb" id="511145-b3707"/>
<dbReference type="EnsemblBacteria" id="AAC76730">
    <property type="protein sequence ID" value="AAC76730"/>
    <property type="gene ID" value="b3707"/>
</dbReference>
<dbReference type="GeneID" id="89518606"/>
<dbReference type="GeneID" id="948223"/>
<dbReference type="KEGG" id="ecj:JW3685"/>
<dbReference type="KEGG" id="eco:b3707"/>
<dbReference type="KEGG" id="ecoc:C3026_20100"/>
<dbReference type="EchoBASE" id="EB1254"/>
<dbReference type="HOGENOM" id="CLU_221068_0_0_6"/>
<dbReference type="InParanoid" id="P0AD89"/>
<dbReference type="BioCyc" id="EcoCyc:EG11276-MONOMER"/>
<dbReference type="EvolutionaryTrace" id="P0AD89"/>
<dbReference type="PRO" id="PR:P0AD89"/>
<dbReference type="Proteomes" id="UP000000625">
    <property type="component" value="Chromosome"/>
</dbReference>
<dbReference type="GO" id="GO:0019843">
    <property type="term" value="F:rRNA binding"/>
    <property type="evidence" value="ECO:0007669"/>
    <property type="project" value="UniProtKB-KW"/>
</dbReference>
<dbReference type="GO" id="GO:0006569">
    <property type="term" value="P:L-tryptophan catabolic process"/>
    <property type="evidence" value="ECO:0007669"/>
    <property type="project" value="UniProtKB-KW"/>
</dbReference>
<dbReference type="GO" id="GO:0090358">
    <property type="term" value="P:positive regulation of L-tryptophan metabolic process"/>
    <property type="evidence" value="ECO:0000315"/>
    <property type="project" value="EcoCyc"/>
</dbReference>
<dbReference type="GO" id="GO:0031556">
    <property type="term" value="P:transcriptional attenuation by ribosome"/>
    <property type="evidence" value="ECO:0000314"/>
    <property type="project" value="EcoCyc"/>
</dbReference>
<dbReference type="InterPro" id="IPR012620">
    <property type="entry name" value="Trp_operon_leader_peptide"/>
</dbReference>
<dbReference type="NCBIfam" id="TIGR02616">
    <property type="entry name" value="tnaC_leader"/>
    <property type="match status" value="1"/>
</dbReference>
<dbReference type="Pfam" id="PF08053">
    <property type="entry name" value="Tna_leader"/>
    <property type="match status" value="1"/>
</dbReference>
<protein>
    <recommendedName>
        <fullName evidence="5">Tryptophanase operon leader peptide</fullName>
    </recommendedName>
    <alternativeName>
        <fullName evidence="4">TnaC</fullName>
    </alternativeName>
</protein>
<name>LPTN_ECOLI</name>
<proteinExistence type="evidence at protein level"/>
<accession>P0AD89</accession>
<accession>P09408</accession>
<accession>Q2M820</accession>
<gene>
    <name evidence="5" type="primary">tnaC</name>
    <name type="synonym">tnaL</name>
    <name type="ordered locus">b3707</name>
    <name type="ordered locus">JW3685</name>
</gene>
<comment type="function">
    <text evidence="1 2 3">Required for tryptophan-regulated expression of the tna operon. In the presence of high levels of L-Trp release of this nascent peptide by release factor 2 (RF2, prfB) is inhibited. The ribosome stalls with Pro-24 in the P site and a UGA stop codon in the A site. This prevents transcription termination factor Rho binding, and thus allows transcription and translation of downstream TnaA and TnaB (PubMed:12228716, PubMed:34504068). The presence of TnaC and L-Trp prevents the catalytic GGQ motif of RF2 from engaging with the peptidyl-transferase center (PTC); nucleotides of the PTC are perturbed while Arg-23 probably clashes with 'N5-methyl-Gln-252' of RF2, preventing RF2 from reaching the PTC, and from releasing the translated TnaC peptide (PubMed:34403461, PubMed:34504068). Translation of this peptide turns the ribosome into a small-molecule sensor specifically recognizing L-Trp (PubMed:34403461, PubMed:34504068).</text>
</comment>
<comment type="subunit">
    <text evidence="3">In the presence of L-Trp stalls in the ribosomal exit tunnel near the constriction formed by ribosomal proteins uL4 and uL22, where it binds L-Trp, 23S rRNA, and probably contacts uL4 and uL22.</text>
</comment>
<evidence type="ECO:0000269" key="1">
    <source>
    </source>
</evidence>
<evidence type="ECO:0000269" key="2">
    <source>
    </source>
</evidence>
<evidence type="ECO:0000269" key="3">
    <source>
    </source>
</evidence>
<evidence type="ECO:0000303" key="4">
    <source>
    </source>
</evidence>
<evidence type="ECO:0000303" key="5">
    <source>
    </source>
</evidence>
<evidence type="ECO:0000312" key="6">
    <source>
        <dbReference type="PDB" id="7O19"/>
    </source>
</evidence>
<evidence type="ECO:0000312" key="7">
    <source>
        <dbReference type="PDB" id="7O1A"/>
    </source>
</evidence>
<evidence type="ECO:0000312" key="8">
    <source>
        <dbReference type="PDB" id="7O1C"/>
    </source>
</evidence>
<evidence type="ECO:0000312" key="9">
    <source>
        <dbReference type="PDB" id="7OIZ"/>
    </source>
</evidence>
<evidence type="ECO:0000312" key="10">
    <source>
        <dbReference type="PDB" id="7OJ0"/>
    </source>
</evidence>
<evidence type="ECO:0007744" key="11">
    <source>
        <dbReference type="PDB" id="4UY8"/>
    </source>
</evidence>
<evidence type="ECO:0007829" key="12">
    <source>
        <dbReference type="PDB" id="6I0Y"/>
    </source>
</evidence>
<reference key="1">
    <citation type="journal article" date="1985" name="J. Bacteriol.">
        <title>Evidence for transcription antitermination control of tryptophanase operon expression in Escherichia coli K-12.</title>
        <authorList>
            <person name="Stewart V."/>
            <person name="Yanofsky C."/>
        </authorList>
    </citation>
    <scope>NUCLEOTIDE SEQUENCE [GENOMIC DNA]</scope>
    <source>
        <strain>K12</strain>
    </source>
</reference>
<reference key="2">
    <citation type="journal article" date="1993" name="Genomics">
        <title>DNA sequence and analysis of 136 kilobases of the Escherichia coli genome: organizational symmetry around the origin of replication.</title>
        <authorList>
            <person name="Burland V.D."/>
            <person name="Plunkett G. III"/>
            <person name="Daniels D.L."/>
            <person name="Blattner F.R."/>
        </authorList>
    </citation>
    <scope>NUCLEOTIDE SEQUENCE [LARGE SCALE GENOMIC DNA]</scope>
    <source>
        <strain>K12 / MG1655 / ATCC 47076</strain>
    </source>
</reference>
<reference key="3">
    <citation type="journal article" date="1997" name="Science">
        <title>The complete genome sequence of Escherichia coli K-12.</title>
        <authorList>
            <person name="Blattner F.R."/>
            <person name="Plunkett G. III"/>
            <person name="Bloch C.A."/>
            <person name="Perna N.T."/>
            <person name="Burland V."/>
            <person name="Riley M."/>
            <person name="Collado-Vides J."/>
            <person name="Glasner J.D."/>
            <person name="Rode C.K."/>
            <person name="Mayhew G.F."/>
            <person name="Gregor J."/>
            <person name="Davis N.W."/>
            <person name="Kirkpatrick H.A."/>
            <person name="Goeden M.A."/>
            <person name="Rose D.J."/>
            <person name="Mau B."/>
            <person name="Shao Y."/>
        </authorList>
    </citation>
    <scope>NUCLEOTIDE SEQUENCE [LARGE SCALE GENOMIC DNA]</scope>
    <source>
        <strain>K12 / MG1655 / ATCC 47076</strain>
    </source>
</reference>
<reference key="4">
    <citation type="journal article" date="2006" name="Mol. Syst. Biol.">
        <title>Highly accurate genome sequences of Escherichia coli K-12 strains MG1655 and W3110.</title>
        <authorList>
            <person name="Hayashi K."/>
            <person name="Morooka N."/>
            <person name="Yamamoto Y."/>
            <person name="Fujita K."/>
            <person name="Isono K."/>
            <person name="Choi S."/>
            <person name="Ohtsubo E."/>
            <person name="Baba T."/>
            <person name="Wanner B.L."/>
            <person name="Mori H."/>
            <person name="Horiuchi T."/>
        </authorList>
    </citation>
    <scope>NUCLEOTIDE SEQUENCE [LARGE SCALE GENOMIC DNA]</scope>
    <source>
        <strain>K12 / W3110 / ATCC 27325 / DSM 5911</strain>
    </source>
</reference>
<reference key="5">
    <citation type="journal article" date="2002" name="Science">
        <title>Instruction of translating ribosome by nascent peptide.</title>
        <authorList>
            <person name="Gong F."/>
            <person name="Yanofsky C."/>
        </authorList>
    </citation>
    <scope>FUNCTION</scope>
</reference>
<reference evidence="11" key="6">
    <citation type="journal article" date="2014" name="Cell Rep.">
        <title>Molecular basis for the ribosome functioning as an L-tryptophan sensor.</title>
        <authorList>
            <person name="Bischoff L."/>
            <person name="Berninghausen O."/>
            <person name="Beckmann R."/>
        </authorList>
    </citation>
    <scope>STRUCTURE BY ELECTRON MICROSCOPY (3.80 ANGSTROMS) OF 5-24 IN TNAC-STALLED 50S RIBOSOMAL SUBUNIT</scope>
    <source>
        <strain>K12 / A19 / KC6</strain>
    </source>
</reference>
<reference evidence="6 7 8" key="7">
    <citation type="journal article" date="2021" name="Nat. Commun.">
        <title>Structural basis for the tryptophan sensitivity of TnaC-mediated ribosome stalling.</title>
        <authorList>
            <person name="van der Stel A.X."/>
            <person name="Gordon E.R."/>
            <person name="Sengupta A."/>
            <person name="Martinez A.K."/>
            <person name="Klepacki D."/>
            <person name="Perry T.N."/>
            <person name="Herrero Del Valle A."/>
            <person name="Vazquez-Laslop N."/>
            <person name="Sachs M.S."/>
            <person name="Cruz-Vera L.R."/>
            <person name="Innis C.A."/>
        </authorList>
    </citation>
    <scope>STRUCTURE BY ELECTRON MICROSCOPY (2.40 ANGSTROMS) OF 8-24 IN TNAC-STALLED RIBOSOME WITH L-TRYPTOPHAN WITH OR WITHOUT RELEASE FACTOR 2</scope>
    <scope>FUNCTION</scope>
    <scope>SUBUNIT</scope>
    <scope>RRNA-BINDING</scope>
    <scope>MUTAGENESIS OF TRP-12; ASP-16 AND ARG-23</scope>
    <source>
        <strain>K12 / MG1655 / ATCC 47076</strain>
    </source>
</reference>
<reference evidence="9 10" key="8">
    <citation type="journal article" date="2021" name="Nucleic Acids Res.">
        <title>Structural basis of L-tryptophan-dependent inhibition of release factor 2 by the TnaC arrest peptide.</title>
        <authorList>
            <person name="Su T."/>
            <person name="Kudva R."/>
            <person name="Becker T."/>
            <person name="Buschauer R."/>
            <person name="Komar T."/>
            <person name="Berninghausen O."/>
            <person name="von Heijne G."/>
            <person name="Cheng J."/>
            <person name="Beckmann R."/>
        </authorList>
    </citation>
    <scope>STRUCTURE BY ELECTRON MICROSCOPY (2.90 ANGSTROMS) OF 9-24 IN TNAC-STALLED RIBOSOME WITH AND WITHOUT L-TRYPTOPHAN AND RELEASE FACTOR 2</scope>
    <scope>FUNCTION</scope>
    <scope>RRNA-BINDING</scope>
    <source>
        <strain>K12</strain>
    </source>
</reference>
<organism>
    <name type="scientific">Escherichia coli (strain K12)</name>
    <dbReference type="NCBI Taxonomy" id="83333"/>
    <lineage>
        <taxon>Bacteria</taxon>
        <taxon>Pseudomonadati</taxon>
        <taxon>Pseudomonadota</taxon>
        <taxon>Gammaproteobacteria</taxon>
        <taxon>Enterobacterales</taxon>
        <taxon>Enterobacteriaceae</taxon>
        <taxon>Escherichia</taxon>
    </lineage>
</organism>
<keyword id="KW-0002">3D-structure</keyword>
<keyword id="KW-0428">Leader peptide</keyword>
<keyword id="KW-1185">Reference proteome</keyword>
<keyword id="KW-0694">RNA-binding</keyword>
<keyword id="KW-0699">rRNA-binding</keyword>
<keyword id="KW-0823">Tryptophan catabolism</keyword>
<feature type="peptide" id="PRO_0000044011" description="Tryptophanase operon leader peptide">
    <location>
        <begin position="1"/>
        <end position="24"/>
    </location>
</feature>
<feature type="binding site" evidence="2 3">
    <location>
        <position position="12"/>
    </location>
    <ligand>
        <name>L-tryptophan</name>
        <dbReference type="ChEBI" id="CHEBI:57912"/>
        <note>In TnaC-stalled ribosomes</note>
    </ligand>
</feature>
<feature type="mutagenesis site" description="Abolishes TnaC-mediated ribosome stalling." evidence="3">
    <original>W</original>
    <variation>R</variation>
    <location>
        <position position="12"/>
    </location>
</feature>
<feature type="mutagenesis site" description="Abolishes Trp-dependent ribosome stalling, prevents expression of TnaA and TnaB." evidence="3">
    <original>D</original>
    <variation>E</variation>
    <location>
        <position position="16"/>
    </location>
</feature>
<feature type="mutagenesis site" description="Hypersensitive to L-Trp, stalls 50% of ribosomes at 11 uM L-Trp. More than 20-fold increase in basal expression of tnaCAB operon." evidence="3">
    <original>R</original>
    <variation>F</variation>
    <location>
        <position position="23"/>
    </location>
</feature>
<feature type="mutagenesis site" description="Hypersensitive to L-Trp, stalls 50% of ribosomes at 107 uM L-Trp. More than 20-fold increase in basal expression of tnCAB operon. Suppresses loss of function of D16E mutation; when associated with E-16." evidence="3">
    <original>R</original>
    <variation>H</variation>
    <location>
        <position position="23"/>
    </location>
</feature>
<feature type="helix" evidence="12">
    <location>
        <begin position="12"/>
        <end position="15"/>
    </location>
</feature>
<feature type="helix" evidence="12">
    <location>
        <begin position="17"/>
        <end position="21"/>
    </location>
</feature>
<sequence length="24" mass="2894">MNILHICVTSKWFNIDNKIVDHRP</sequence>